<organism evidence="7">
    <name type="scientific">Caenorhabditis elegans</name>
    <dbReference type="NCBI Taxonomy" id="6239"/>
    <lineage>
        <taxon>Eukaryota</taxon>
        <taxon>Metazoa</taxon>
        <taxon>Ecdysozoa</taxon>
        <taxon>Nematoda</taxon>
        <taxon>Chromadorea</taxon>
        <taxon>Rhabditida</taxon>
        <taxon>Rhabditina</taxon>
        <taxon>Rhabditomorpha</taxon>
        <taxon>Rhabditoidea</taxon>
        <taxon>Rhabditidae</taxon>
        <taxon>Peloderinae</taxon>
        <taxon>Caenorhabditis</taxon>
    </lineage>
</organism>
<proteinExistence type="evidence at protein level"/>
<keyword id="KW-0025">Alternative splicing</keyword>
<keyword id="KW-0479">Metal-binding</keyword>
<keyword id="KW-0539">Nucleus</keyword>
<keyword id="KW-1185">Reference proteome</keyword>
<keyword id="KW-0677">Repeat</keyword>
<keyword id="KW-0804">Transcription</keyword>
<keyword id="KW-0805">Transcription regulation</keyword>
<keyword id="KW-0862">Zinc</keyword>
<keyword id="KW-0863">Zinc-finger</keyword>
<name>ZTF16_CAEEL</name>
<evidence type="ECO:0000255" key="1">
    <source>
        <dbReference type="PROSITE-ProRule" id="PRU00042"/>
    </source>
</evidence>
<evidence type="ECO:0000256" key="2">
    <source>
        <dbReference type="SAM" id="MobiDB-lite"/>
    </source>
</evidence>
<evidence type="ECO:0000269" key="3">
    <source>
    </source>
</evidence>
<evidence type="ECO:0000269" key="4">
    <source>
    </source>
</evidence>
<evidence type="ECO:0000303" key="5">
    <source>
    </source>
</evidence>
<evidence type="ECO:0000305" key="6"/>
<evidence type="ECO:0000312" key="7">
    <source>
        <dbReference type="Proteomes" id="UP000001940"/>
    </source>
</evidence>
<evidence type="ECO:0000312" key="8">
    <source>
        <dbReference type="WormBase" id="R08E3.4a"/>
    </source>
</evidence>
<evidence type="ECO:0000312" key="9">
    <source>
        <dbReference type="WormBase" id="R08E3.4b"/>
    </source>
</evidence>
<gene>
    <name evidence="5 9" type="primary">ztf-16</name>
    <name evidence="9" type="ORF">R08E3.4</name>
</gene>
<sequence length="480" mass="54081">MDELNACTECGFTTTVFSEFQGHIEKHENEHSRSSSGEMSNSQTIEWGDGIQSSTPSPRSTPPSDPTPSPDSDEHLEHHISITEITNTLIKKEPGTKGQKTVHVCPHCNFTTCMSQHMKSHLEAHERHQGQMYQCDICKMQFSQKANMHRHRMRHSGVKPYECRFCKKRFFRKDQMQEHSMTHIKTGFGFDCPVSQCNMQFSQHNALRAHLEETHTISSTNPASCKRCNLMFANSRRLLLHFQTRHDDSESSPKKENTPKRKKLSNGNALPMDPANMSITEQLQRMVKSEFSPPNTDTSDNSTSSEFDKIPPSFPMANPDILLMCLNQMNQFNGFGENIPRPMLNIPNIPLPALHNIPAVAAIVKQDQVQLWSEQTSSSVSVSAPSPSEQSHSPPANESSLSLTEKEKSPTPEKEDEENVECCHCGMMFYDNTMYLLHKSLHSDGDPFKCALCGTQCGEKYMFTTHVIFADHSTQATTSA</sequence>
<accession>H2L008</accession>
<accession>Q5WRS1</accession>
<protein>
    <recommendedName>
        <fullName evidence="6">Zinc finger protein ztf-16</fullName>
    </recommendedName>
</protein>
<dbReference type="EMBL" id="BX284606">
    <property type="protein sequence ID" value="CCD70858.1"/>
    <property type="molecule type" value="Genomic_DNA"/>
</dbReference>
<dbReference type="EMBL" id="BX284606">
    <property type="protein sequence ID" value="CCD70859.1"/>
    <property type="molecule type" value="Genomic_DNA"/>
</dbReference>
<dbReference type="RefSeq" id="NP_001024850.1">
    <molecule id="H2L008-2"/>
    <property type="nucleotide sequence ID" value="NM_001029679.5"/>
</dbReference>
<dbReference type="RefSeq" id="NP_001024851.1">
    <molecule id="H2L008-1"/>
    <property type="nucleotide sequence ID" value="NM_001029680.6"/>
</dbReference>
<dbReference type="SMR" id="H2L008"/>
<dbReference type="FunCoup" id="H2L008">
    <property type="interactions" value="165"/>
</dbReference>
<dbReference type="IntAct" id="H2L008">
    <property type="interactions" value="50"/>
</dbReference>
<dbReference type="STRING" id="6239.R08E3.4b.1"/>
<dbReference type="PaxDb" id="6239-R08E3.4b"/>
<dbReference type="PeptideAtlas" id="H2L008"/>
<dbReference type="EnsemblMetazoa" id="R08E3.4a.1">
    <molecule id="H2L008-2"/>
    <property type="protein sequence ID" value="R08E3.4a.1"/>
    <property type="gene ID" value="WBGene00019960"/>
</dbReference>
<dbReference type="EnsemblMetazoa" id="R08E3.4b.1">
    <molecule id="H2L008-1"/>
    <property type="protein sequence ID" value="R08E3.4b.1"/>
    <property type="gene ID" value="WBGene00019960"/>
</dbReference>
<dbReference type="GeneID" id="180756"/>
<dbReference type="KEGG" id="cel:CELE_R08E3.4"/>
<dbReference type="UCSC" id="R08E3.4b">
    <property type="organism name" value="c. elegans"/>
</dbReference>
<dbReference type="AGR" id="WB:WBGene00019960"/>
<dbReference type="CTD" id="180756"/>
<dbReference type="WormBase" id="R08E3.4a">
    <molecule id="H2L008-2"/>
    <property type="protein sequence ID" value="CE37662"/>
    <property type="gene ID" value="WBGene00019960"/>
    <property type="gene designation" value="ztf-16"/>
</dbReference>
<dbReference type="WormBase" id="R08E3.4b">
    <molecule id="H2L008-1"/>
    <property type="protein sequence ID" value="CE37663"/>
    <property type="gene ID" value="WBGene00019960"/>
    <property type="gene designation" value="ztf-16"/>
</dbReference>
<dbReference type="eggNOG" id="KOG1601">
    <property type="taxonomic scope" value="Eukaryota"/>
</dbReference>
<dbReference type="eggNOG" id="KOG1721">
    <property type="taxonomic scope" value="Eukaryota"/>
</dbReference>
<dbReference type="GeneTree" id="ENSGT00720000109290"/>
<dbReference type="HOGENOM" id="CLU_016943_1_0_1"/>
<dbReference type="InParanoid" id="H2L008"/>
<dbReference type="OMA" id="NICKRAF"/>
<dbReference type="OrthoDB" id="5576026at2759"/>
<dbReference type="PhylomeDB" id="H2L008"/>
<dbReference type="SignaLink" id="H2L008"/>
<dbReference type="PRO" id="PR:H2L008"/>
<dbReference type="Proteomes" id="UP000001940">
    <property type="component" value="Chromosome X"/>
</dbReference>
<dbReference type="Bgee" id="WBGene00019960">
    <property type="expression patterns" value="Expressed in pharyngeal muscle cell (C elegans) and 3 other cell types or tissues"/>
</dbReference>
<dbReference type="GO" id="GO:0005634">
    <property type="term" value="C:nucleus"/>
    <property type="evidence" value="ECO:0000314"/>
    <property type="project" value="WormBase"/>
</dbReference>
<dbReference type="GO" id="GO:0003700">
    <property type="term" value="F:DNA-binding transcription factor activity"/>
    <property type="evidence" value="ECO:0000318"/>
    <property type="project" value="GO_Central"/>
</dbReference>
<dbReference type="GO" id="GO:0000978">
    <property type="term" value="F:RNA polymerase II cis-regulatory region sequence-specific DNA binding"/>
    <property type="evidence" value="ECO:0000318"/>
    <property type="project" value="GO_Central"/>
</dbReference>
<dbReference type="GO" id="GO:0008270">
    <property type="term" value="F:zinc ion binding"/>
    <property type="evidence" value="ECO:0007669"/>
    <property type="project" value="UniProtKB-KW"/>
</dbReference>
<dbReference type="GO" id="GO:0008406">
    <property type="term" value="P:gonad development"/>
    <property type="evidence" value="ECO:0000316"/>
    <property type="project" value="WormBase"/>
</dbReference>
<dbReference type="GO" id="GO:0010628">
    <property type="term" value="P:positive regulation of gene expression"/>
    <property type="evidence" value="ECO:0000315"/>
    <property type="project" value="UniProtKB"/>
</dbReference>
<dbReference type="GO" id="GO:0006357">
    <property type="term" value="P:regulation of transcription by RNA polymerase II"/>
    <property type="evidence" value="ECO:0000318"/>
    <property type="project" value="GO_Central"/>
</dbReference>
<dbReference type="FunFam" id="3.30.160.60:FF:004893">
    <property type="match status" value="1"/>
</dbReference>
<dbReference type="FunFam" id="3.30.160.60:FF:001669">
    <property type="entry name" value="Uncharacterized protein, isoform B"/>
    <property type="match status" value="1"/>
</dbReference>
<dbReference type="FunFam" id="3.30.160.60:FF:003608">
    <property type="entry name" value="Zinc finger and BTB domain-containing 32"/>
    <property type="match status" value="1"/>
</dbReference>
<dbReference type="Gene3D" id="3.30.160.60">
    <property type="entry name" value="Classic Zinc Finger"/>
    <property type="match status" value="4"/>
</dbReference>
<dbReference type="InterPro" id="IPR050527">
    <property type="entry name" value="Snail/Krueppel_Znf"/>
</dbReference>
<dbReference type="InterPro" id="IPR036236">
    <property type="entry name" value="Znf_C2H2_sf"/>
</dbReference>
<dbReference type="InterPro" id="IPR013087">
    <property type="entry name" value="Znf_C2H2_type"/>
</dbReference>
<dbReference type="PANTHER" id="PTHR24388:SF54">
    <property type="entry name" value="PROTEIN ESCARGOT"/>
    <property type="match status" value="1"/>
</dbReference>
<dbReference type="PANTHER" id="PTHR24388">
    <property type="entry name" value="ZINC FINGER PROTEIN"/>
    <property type="match status" value="1"/>
</dbReference>
<dbReference type="Pfam" id="PF00096">
    <property type="entry name" value="zf-C2H2"/>
    <property type="match status" value="1"/>
</dbReference>
<dbReference type="SMART" id="SM00355">
    <property type="entry name" value="ZnF_C2H2"/>
    <property type="match status" value="8"/>
</dbReference>
<dbReference type="SUPFAM" id="SSF57667">
    <property type="entry name" value="beta-beta-alpha zinc fingers"/>
    <property type="match status" value="2"/>
</dbReference>
<dbReference type="PROSITE" id="PS00028">
    <property type="entry name" value="ZINC_FINGER_C2H2_1"/>
    <property type="match status" value="6"/>
</dbReference>
<dbReference type="PROSITE" id="PS50157">
    <property type="entry name" value="ZINC_FINGER_C2H2_2"/>
    <property type="match status" value="4"/>
</dbReference>
<reference evidence="7" key="1">
    <citation type="journal article" date="1998" name="Science">
        <title>Genome sequence of the nematode C. elegans: a platform for investigating biology.</title>
        <authorList>
            <consortium name="The C. elegans sequencing consortium"/>
        </authorList>
    </citation>
    <scope>NUCLEOTIDE SEQUENCE [LARGE SCALE GENOMIC DNA]</scope>
    <source>
        <strain evidence="7">Bristol N2</strain>
    </source>
</reference>
<reference evidence="6" key="2">
    <citation type="journal article" date="2010" name="Dev. Biol.">
        <title>hunchback and Ikaros-like zinc finger genes control reproductive system development in Caenorhabditis elegans.</title>
        <authorList>
            <person name="Large E.E."/>
            <person name="Mathies L.D."/>
        </authorList>
    </citation>
    <scope>FUNCTION</scope>
    <scope>TISSUE SPECIFICITY</scope>
    <scope>DEVELOPMENTAL STAGE</scope>
    <scope>DISRUPTION PHENOTYPE</scope>
</reference>
<reference evidence="6" key="3">
    <citation type="journal article" date="2012" name="Genetics">
        <title>Sensory organ remodeling in Caenorhabditis elegans requires the zinc-finger protein ZTF-16.</title>
        <authorList>
            <person name="Procko C."/>
            <person name="Lu Y."/>
            <person name="Shaham S."/>
        </authorList>
    </citation>
    <scope>FUNCTION</scope>
    <scope>SUBCELLULAR LOCATION</scope>
    <scope>TISSUE SPECIFICITY</scope>
    <scope>MUTAGENESIS OF 131-GLN--ALA-480 AND 236-ARG--ALA-480</scope>
</reference>
<feature type="chain" id="PRO_0000448221" description="Zinc finger protein ztf-16">
    <location>
        <begin position="1"/>
        <end position="480"/>
    </location>
</feature>
<feature type="zinc finger region" description="C2H2-type 1" evidence="1">
    <location>
        <begin position="5"/>
        <end position="27"/>
    </location>
</feature>
<feature type="zinc finger region" description="C2H2-type 2" evidence="1">
    <location>
        <begin position="103"/>
        <end position="125"/>
    </location>
</feature>
<feature type="zinc finger region" description="C2H2-type 3" evidence="1">
    <location>
        <begin position="133"/>
        <end position="155"/>
    </location>
</feature>
<feature type="zinc finger region" description="C2H2-type 4" evidence="1">
    <location>
        <begin position="161"/>
        <end position="183"/>
    </location>
</feature>
<feature type="zinc finger region" description="C2H2-type 5" evidence="1">
    <location>
        <begin position="190"/>
        <end position="215"/>
    </location>
</feature>
<feature type="zinc finger region" description="C2H2-type 6" evidence="1">
    <location>
        <begin position="223"/>
        <end position="246"/>
    </location>
</feature>
<feature type="zinc finger region" description="C2H2-type 7" evidence="1">
    <location>
        <begin position="420"/>
        <end position="442"/>
    </location>
</feature>
<feature type="zinc finger region" description="C2H2-type 8" evidence="1">
    <location>
        <begin position="448"/>
        <end position="472"/>
    </location>
</feature>
<feature type="region of interest" description="Disordered" evidence="2">
    <location>
        <begin position="25"/>
        <end position="75"/>
    </location>
</feature>
<feature type="region of interest" description="Disordered" evidence="2">
    <location>
        <begin position="243"/>
        <end position="275"/>
    </location>
</feature>
<feature type="region of interest" description="Disordered" evidence="2">
    <location>
        <begin position="290"/>
        <end position="311"/>
    </location>
</feature>
<feature type="region of interest" description="Disordered" evidence="2">
    <location>
        <begin position="376"/>
        <end position="417"/>
    </location>
</feature>
<feature type="compositionally biased region" description="Polar residues" evidence="2">
    <location>
        <begin position="34"/>
        <end position="45"/>
    </location>
</feature>
<feature type="compositionally biased region" description="Pro residues" evidence="2">
    <location>
        <begin position="59"/>
        <end position="69"/>
    </location>
</feature>
<feature type="compositionally biased region" description="Basic and acidic residues" evidence="2">
    <location>
        <begin position="244"/>
        <end position="259"/>
    </location>
</feature>
<feature type="compositionally biased region" description="Low complexity" evidence="2">
    <location>
        <begin position="292"/>
        <end position="305"/>
    </location>
</feature>
<feature type="compositionally biased region" description="Low complexity" evidence="2">
    <location>
        <begin position="376"/>
        <end position="403"/>
    </location>
</feature>
<feature type="compositionally biased region" description="Basic and acidic residues" evidence="2">
    <location>
        <begin position="404"/>
        <end position="413"/>
    </location>
</feature>
<feature type="splice variant" id="VSP_060358" description="In isoform a." evidence="6">
    <original>ECCHCGMMFYDNTMYLLHKSLHSDGDP</original>
    <variation>VCVIANNNLLLKMSPFCLPFFEVQLEL</variation>
    <location>
        <begin position="421"/>
        <end position="447"/>
    </location>
</feature>
<feature type="splice variant" id="VSP_060359" description="In isoform a." evidence="6">
    <location>
        <begin position="448"/>
        <end position="480"/>
    </location>
</feature>
<feature type="mutagenesis site" description="In ns169; reduces expression of ver-1 in amphid sheath glia." evidence="4">
    <location>
        <begin position="131"/>
        <end position="480"/>
    </location>
</feature>
<feature type="mutagenesis site" description="In ns178 and ns171; defective amphid glia remodeling. Reduces expression of ver-1 in amphid sheath glia." evidence="4">
    <location>
        <begin position="236"/>
        <end position="480"/>
    </location>
</feature>
<comment type="function">
    <text evidence="3 4">Positively regulates the expression of ver-1 in the amphid sheath glia of amphid sensory neurons (PubMed:22298710). Together with ehn-3, plays a role in somatic gonad development and is required for proper gonadal primordium assembly and somatic gonad precursor cell morphology (PubMed:20026024).</text>
</comment>
<comment type="subcellular location">
    <subcellularLocation>
        <location evidence="4">Nucleus</location>
    </subcellularLocation>
</comment>
<comment type="alternative products">
    <event type="alternative splicing"/>
    <isoform>
        <id>H2L008-1</id>
        <name evidence="9">b</name>
        <sequence type="displayed"/>
    </isoform>
    <isoform>
        <id>H2L008-2</id>
        <name evidence="8">a</name>
        <sequence type="described" ref="VSP_060358 VSP_060359"/>
    </isoform>
</comment>
<comment type="tissue specificity">
    <text evidence="3 4">Expressed in the somatic gonad, hypodermis and cells in the head and tail (PubMed:20026024). Expressed in amphid and phasmid sheath glia, amphid and phasmid socket glia, and in neurons in the head (PubMed:22298710).</text>
</comment>
<comment type="developmental stage">
    <text evidence="3">Expressed from embryos to adults (PubMed:20026024). First expressed in somatic gonadal precursor cells during embryogenesis (PubMed:20026024). In the L2 larval stage of development, expressed in Z1.pa and Z4.ap distal tip cells and their descendants (PubMed:20026024).</text>
</comment>
<comment type="disruption phenotype">
    <text evidence="3">RNAi-mediated knockdown does not cause defects in somatic gonad development (PubMed:20026024). RNAi-mediated knockdown in a ehn-3 rd2 mutant background enhances the defects in gonadal development in the ehn-3 single mutant (PubMed:20026024).</text>
</comment>
<comment type="similarity">
    <text evidence="6">Belongs to the Ikaros C2H2-type zinc-finger protein family.</text>
</comment>